<proteinExistence type="evidence at transcript level"/>
<sequence length="325" mass="36964">MEEERDHNASESSLPSLSKQLESSTLGGSAVDVPVVDLSVSDEDFLVREVVKASEEWGVFQVVNHGIPTELMRQLQMVGTQFFELPDAEKETVAKEEDFEGYKKNYLGGINNWDEHLFHRLSPPSIINYKYWPKNPPQYREVTEEYTKHMKRLTEKILGWLSEGLGLQRETFTQSIGGDTAEYVLRVNFYPPTQDTELVIGAAAHSDMGAIALLIPNEVPGLQAFKDEQWLDLDYIDSAVVVIIGDQLMRMTNGRLKNVLHRAKSDKDKLRISWPVFVAPRADMSVGPLPEFTGDENPPKFETLIYNDYIDQKIRGWALEDLPVY</sequence>
<name>FLS5_ARATH</name>
<protein>
    <recommendedName>
        <fullName>Probable flavonol synthase 5</fullName>
        <ecNumber>1.14.20.6</ecNumber>
    </recommendedName>
</protein>
<reference key="1">
    <citation type="journal article" date="1997" name="DNA Res.">
        <title>Structural analysis of Arabidopsis thaliana chromosome 5. I. Sequence features of the 1.6 Mb regions covered by twenty physically assigned P1 clones.</title>
        <authorList>
            <person name="Sato S."/>
            <person name="Kotani H."/>
            <person name="Nakamura Y."/>
            <person name="Kaneko T."/>
            <person name="Asamizu E."/>
            <person name="Fukami M."/>
            <person name="Miyajima N."/>
            <person name="Tabata S."/>
        </authorList>
    </citation>
    <scope>NUCLEOTIDE SEQUENCE [LARGE SCALE GENOMIC DNA]</scope>
    <source>
        <strain>cv. Columbia</strain>
    </source>
</reference>
<reference key="2">
    <citation type="journal article" date="2017" name="Plant J.">
        <title>Araport11: a complete reannotation of the Arabidopsis thaliana reference genome.</title>
        <authorList>
            <person name="Cheng C.Y."/>
            <person name="Krishnakumar V."/>
            <person name="Chan A.P."/>
            <person name="Thibaud-Nissen F."/>
            <person name="Schobel S."/>
            <person name="Town C.D."/>
        </authorList>
    </citation>
    <scope>GENOME REANNOTATION</scope>
    <source>
        <strain>cv. Columbia</strain>
    </source>
</reference>
<reference key="3">
    <citation type="journal article" date="2003" name="Science">
        <title>Empirical analysis of transcriptional activity in the Arabidopsis genome.</title>
        <authorList>
            <person name="Yamada K."/>
            <person name="Lim J."/>
            <person name="Dale J.M."/>
            <person name="Chen H."/>
            <person name="Shinn P."/>
            <person name="Palm C.J."/>
            <person name="Southwick A.M."/>
            <person name="Wu H.C."/>
            <person name="Kim C.J."/>
            <person name="Nguyen M."/>
            <person name="Pham P.K."/>
            <person name="Cheuk R.F."/>
            <person name="Karlin-Newmann G."/>
            <person name="Liu S.X."/>
            <person name="Lam B."/>
            <person name="Sakano H."/>
            <person name="Wu T."/>
            <person name="Yu G."/>
            <person name="Miranda M."/>
            <person name="Quach H.L."/>
            <person name="Tripp M."/>
            <person name="Chang C.H."/>
            <person name="Lee J.M."/>
            <person name="Toriumi M.J."/>
            <person name="Chan M.M."/>
            <person name="Tang C.C."/>
            <person name="Onodera C.S."/>
            <person name="Deng J.M."/>
            <person name="Akiyama K."/>
            <person name="Ansari Y."/>
            <person name="Arakawa T."/>
            <person name="Banh J."/>
            <person name="Banno F."/>
            <person name="Bowser L."/>
            <person name="Brooks S.Y."/>
            <person name="Carninci P."/>
            <person name="Chao Q."/>
            <person name="Choy N."/>
            <person name="Enju A."/>
            <person name="Goldsmith A.D."/>
            <person name="Gurjal M."/>
            <person name="Hansen N.F."/>
            <person name="Hayashizaki Y."/>
            <person name="Johnson-Hopson C."/>
            <person name="Hsuan V.W."/>
            <person name="Iida K."/>
            <person name="Karnes M."/>
            <person name="Khan S."/>
            <person name="Koesema E."/>
            <person name="Ishida J."/>
            <person name="Jiang P.X."/>
            <person name="Jones T."/>
            <person name="Kawai J."/>
            <person name="Kamiya A."/>
            <person name="Meyers C."/>
            <person name="Nakajima M."/>
            <person name="Narusaka M."/>
            <person name="Seki M."/>
            <person name="Sakurai T."/>
            <person name="Satou M."/>
            <person name="Tamse R."/>
            <person name="Vaysberg M."/>
            <person name="Wallender E.K."/>
            <person name="Wong C."/>
            <person name="Yamamura Y."/>
            <person name="Yuan S."/>
            <person name="Shinozaki K."/>
            <person name="Davis R.W."/>
            <person name="Theologis A."/>
            <person name="Ecker J.R."/>
        </authorList>
    </citation>
    <scope>NUCLEOTIDE SEQUENCE [LARGE SCALE MRNA]</scope>
    <source>
        <strain>cv. Columbia</strain>
    </source>
</reference>
<reference key="4">
    <citation type="journal article" date="2008" name="Plant Physiol.">
        <title>Functional analysis of a predicted flavonol synthase gene family in Arabidopsis.</title>
        <authorList>
            <person name="Owens D.K."/>
            <person name="Alerding A.B."/>
            <person name="Crosby K.C."/>
            <person name="Bandara A.B."/>
            <person name="Westwood J.H."/>
            <person name="Winkel B.S."/>
        </authorList>
    </citation>
    <scope>TISSUE SPECIFICITY</scope>
    <scope>GENE FAMILY</scope>
    <scope>NOMENCLATURE</scope>
    <scope>DISRUPTION PHENOTYPE</scope>
    <source>
        <strain>cv. Columbia</strain>
    </source>
</reference>
<reference key="5">
    <citation type="journal article" date="2009" name="Planta">
        <title>Metabolomic and genetic analyses of flavonol synthesis in Arabidopsis thaliana support the in vivo involvement of leucoanthocyanidin dioxygenase.</title>
        <authorList>
            <person name="Stracke R."/>
            <person name="De Vos R.C."/>
            <person name="Bartelniewoehner L."/>
            <person name="Ishihara H."/>
            <person name="Sagasser M."/>
            <person name="Martens S."/>
            <person name="Weisshaar B."/>
        </authorList>
    </citation>
    <scope>DISRUPTION PHENOTYPE</scope>
    <source>
        <strain>cv. No-0</strain>
    </source>
</reference>
<comment type="catalytic activity">
    <reaction>
        <text>a (2R,3R)-dihydroflavonol + 2-oxoglutarate + O2 = a flavonol + succinate + CO2 + H2O</text>
        <dbReference type="Rhea" id="RHEA:21088"/>
        <dbReference type="ChEBI" id="CHEBI:15377"/>
        <dbReference type="ChEBI" id="CHEBI:15379"/>
        <dbReference type="ChEBI" id="CHEBI:16526"/>
        <dbReference type="ChEBI" id="CHEBI:16810"/>
        <dbReference type="ChEBI" id="CHEBI:28802"/>
        <dbReference type="ChEBI" id="CHEBI:30031"/>
        <dbReference type="ChEBI" id="CHEBI:138188"/>
        <dbReference type="EC" id="1.14.20.6"/>
    </reaction>
</comment>
<comment type="cofactor">
    <cofactor evidence="2">
        <name>Fe(2+)</name>
        <dbReference type="ChEBI" id="CHEBI:29033"/>
    </cofactor>
    <text evidence="2">Binds 1 Fe(2+) ion per subunit.</text>
</comment>
<comment type="pathway">
    <text>Secondary metabolite biosynthesis; flavonoid biosynthesis.</text>
</comment>
<comment type="alternative products">
    <event type="alternative splicing"/>
    <isoform>
        <id>Q9FFQ4-1</id>
        <name>1</name>
        <sequence type="displayed"/>
    </isoform>
    <text>A number of isoforms are produced. According to EST sequences.</text>
</comment>
<comment type="tissue specificity">
    <text evidence="4">Expressed in young seedlings.</text>
</comment>
<comment type="disruption phenotype">
    <text evidence="4 5">No visible phenotype under normal growth conditions.</text>
</comment>
<comment type="similarity">
    <text evidence="6">Belongs to the iron/ascorbate-dependent oxidoreductase family.</text>
</comment>
<accession>Q9FFQ4</accession>
<evidence type="ECO:0000250" key="1"/>
<evidence type="ECO:0000255" key="2">
    <source>
        <dbReference type="PROSITE-ProRule" id="PRU00805"/>
    </source>
</evidence>
<evidence type="ECO:0000256" key="3">
    <source>
        <dbReference type="SAM" id="MobiDB-lite"/>
    </source>
</evidence>
<evidence type="ECO:0000269" key="4">
    <source>
    </source>
</evidence>
<evidence type="ECO:0000269" key="5">
    <source>
    </source>
</evidence>
<evidence type="ECO:0000305" key="6"/>
<gene>
    <name type="primary">FLS5</name>
    <name type="ordered locus">At5g63600</name>
    <name type="ORF">MBK5.7</name>
</gene>
<organism>
    <name type="scientific">Arabidopsis thaliana</name>
    <name type="common">Mouse-ear cress</name>
    <dbReference type="NCBI Taxonomy" id="3702"/>
    <lineage>
        <taxon>Eukaryota</taxon>
        <taxon>Viridiplantae</taxon>
        <taxon>Streptophyta</taxon>
        <taxon>Embryophyta</taxon>
        <taxon>Tracheophyta</taxon>
        <taxon>Spermatophyta</taxon>
        <taxon>Magnoliopsida</taxon>
        <taxon>eudicotyledons</taxon>
        <taxon>Gunneridae</taxon>
        <taxon>Pentapetalae</taxon>
        <taxon>rosids</taxon>
        <taxon>malvids</taxon>
        <taxon>Brassicales</taxon>
        <taxon>Brassicaceae</taxon>
        <taxon>Camelineae</taxon>
        <taxon>Arabidopsis</taxon>
    </lineage>
</organism>
<keyword id="KW-0025">Alternative splicing</keyword>
<keyword id="KW-0408">Iron</keyword>
<keyword id="KW-0479">Metal-binding</keyword>
<keyword id="KW-0560">Oxidoreductase</keyword>
<keyword id="KW-1185">Reference proteome</keyword>
<feature type="chain" id="PRO_0000418027" description="Probable flavonol synthase 5">
    <location>
        <begin position="1"/>
        <end position="325"/>
    </location>
</feature>
<feature type="domain" description="Fe2OG dioxygenase" evidence="2">
    <location>
        <begin position="180"/>
        <end position="280"/>
    </location>
</feature>
<feature type="region of interest" description="Disordered" evidence="3">
    <location>
        <begin position="1"/>
        <end position="21"/>
    </location>
</feature>
<feature type="compositionally biased region" description="Polar residues" evidence="3">
    <location>
        <begin position="10"/>
        <end position="21"/>
    </location>
</feature>
<feature type="binding site" evidence="1">
    <location>
        <begin position="188"/>
        <end position="190"/>
    </location>
    <ligand>
        <name>2-oxoglutarate</name>
        <dbReference type="ChEBI" id="CHEBI:16810"/>
    </ligand>
</feature>
<feature type="binding site" evidence="2">
    <location>
        <position position="205"/>
    </location>
    <ligand>
        <name>Fe cation</name>
        <dbReference type="ChEBI" id="CHEBI:24875"/>
        <note>catalytic</note>
    </ligand>
</feature>
<feature type="binding site" evidence="2">
    <location>
        <position position="207"/>
    </location>
    <ligand>
        <name>Fe cation</name>
        <dbReference type="ChEBI" id="CHEBI:24875"/>
        <note>catalytic</note>
    </ligand>
</feature>
<feature type="binding site" evidence="2">
    <location>
        <position position="261"/>
    </location>
    <ligand>
        <name>Fe cation</name>
        <dbReference type="ChEBI" id="CHEBI:24875"/>
        <note>catalytic</note>
    </ligand>
</feature>
<feature type="binding site" evidence="1">
    <location>
        <begin position="271"/>
        <end position="273"/>
    </location>
    <ligand>
        <name>2-oxoglutarate</name>
        <dbReference type="ChEBI" id="CHEBI:16810"/>
    </ligand>
</feature>
<dbReference type="EC" id="1.14.20.6"/>
<dbReference type="EMBL" id="AB005234">
    <property type="protein sequence ID" value="BAB10453.1"/>
    <property type="molecule type" value="Genomic_DNA"/>
</dbReference>
<dbReference type="EMBL" id="CP002688">
    <property type="protein sequence ID" value="AED97774.1"/>
    <property type="molecule type" value="Genomic_DNA"/>
</dbReference>
<dbReference type="EMBL" id="AY063971">
    <property type="protein sequence ID" value="AAL36327.1"/>
    <property type="molecule type" value="mRNA"/>
</dbReference>
<dbReference type="EMBL" id="AY114035">
    <property type="protein sequence ID" value="AAM45083.1"/>
    <property type="molecule type" value="mRNA"/>
</dbReference>
<dbReference type="RefSeq" id="NP_201165.1">
    <molecule id="Q9FFQ4-1"/>
    <property type="nucleotide sequence ID" value="NM_125755.4"/>
</dbReference>
<dbReference type="SMR" id="Q9FFQ4"/>
<dbReference type="BioGRID" id="21722">
    <property type="interactions" value="2"/>
</dbReference>
<dbReference type="FunCoup" id="Q9FFQ4">
    <property type="interactions" value="27"/>
</dbReference>
<dbReference type="STRING" id="3702.Q9FFQ4"/>
<dbReference type="iPTMnet" id="Q9FFQ4"/>
<dbReference type="PaxDb" id="3702-AT5G63600.2"/>
<dbReference type="ProteomicsDB" id="230605">
    <molecule id="Q9FFQ4-1"/>
</dbReference>
<dbReference type="EnsemblPlants" id="AT5G63600.1">
    <molecule id="Q9FFQ4-1"/>
    <property type="protein sequence ID" value="AT5G63600.1"/>
    <property type="gene ID" value="AT5G63600"/>
</dbReference>
<dbReference type="GeneID" id="836480"/>
<dbReference type="Gramene" id="AT5G63600.1">
    <molecule id="Q9FFQ4-1"/>
    <property type="protein sequence ID" value="AT5G63600.1"/>
    <property type="gene ID" value="AT5G63600"/>
</dbReference>
<dbReference type="KEGG" id="ath:AT5G63600"/>
<dbReference type="Araport" id="AT5G63600"/>
<dbReference type="TAIR" id="AT5G63600">
    <property type="gene designation" value="FLS5"/>
</dbReference>
<dbReference type="eggNOG" id="KOG0143">
    <property type="taxonomic scope" value="Eukaryota"/>
</dbReference>
<dbReference type="HOGENOM" id="CLU_010119_16_2_1"/>
<dbReference type="InParanoid" id="Q9FFQ4"/>
<dbReference type="OMA" id="EWIDYFL"/>
<dbReference type="PhylomeDB" id="Q9FFQ4"/>
<dbReference type="UniPathway" id="UPA00154"/>
<dbReference type="PRO" id="PR:Q9FFQ4"/>
<dbReference type="Proteomes" id="UP000006548">
    <property type="component" value="Chromosome 5"/>
</dbReference>
<dbReference type="ExpressionAtlas" id="Q9FFQ4">
    <property type="expression patterns" value="baseline and differential"/>
</dbReference>
<dbReference type="GO" id="GO:0045431">
    <property type="term" value="F:flavonol synthase activity"/>
    <property type="evidence" value="ECO:0007669"/>
    <property type="project" value="UniProtKB-EC"/>
</dbReference>
<dbReference type="GO" id="GO:0046872">
    <property type="term" value="F:metal ion binding"/>
    <property type="evidence" value="ECO:0007669"/>
    <property type="project" value="UniProtKB-KW"/>
</dbReference>
<dbReference type="FunFam" id="2.60.120.330:FF:000067">
    <property type="entry name" value="Probable flavonol synthase 5"/>
    <property type="match status" value="1"/>
</dbReference>
<dbReference type="Gene3D" id="2.60.120.330">
    <property type="entry name" value="B-lactam Antibiotic, Isopenicillin N Synthase, Chain"/>
    <property type="match status" value="1"/>
</dbReference>
<dbReference type="InterPro" id="IPR026992">
    <property type="entry name" value="DIOX_N"/>
</dbReference>
<dbReference type="InterPro" id="IPR044861">
    <property type="entry name" value="IPNS-like_FE2OG_OXY"/>
</dbReference>
<dbReference type="InterPro" id="IPR027443">
    <property type="entry name" value="IPNS-like_sf"/>
</dbReference>
<dbReference type="InterPro" id="IPR005123">
    <property type="entry name" value="Oxoglu/Fe-dep_dioxygenase_dom"/>
</dbReference>
<dbReference type="InterPro" id="IPR050295">
    <property type="entry name" value="Plant_2OG-oxidoreductases"/>
</dbReference>
<dbReference type="PANTHER" id="PTHR47991">
    <property type="entry name" value="OXOGLUTARATE/IRON-DEPENDENT DIOXYGENASE"/>
    <property type="match status" value="1"/>
</dbReference>
<dbReference type="Pfam" id="PF03171">
    <property type="entry name" value="2OG-FeII_Oxy"/>
    <property type="match status" value="1"/>
</dbReference>
<dbReference type="Pfam" id="PF14226">
    <property type="entry name" value="DIOX_N"/>
    <property type="match status" value="1"/>
</dbReference>
<dbReference type="SUPFAM" id="SSF51197">
    <property type="entry name" value="Clavaminate synthase-like"/>
    <property type="match status" value="1"/>
</dbReference>
<dbReference type="PROSITE" id="PS51471">
    <property type="entry name" value="FE2OG_OXY"/>
    <property type="match status" value="1"/>
</dbReference>